<gene>
    <name type="primary">modF</name>
    <name evidence="5" type="synonym">ORF6</name>
    <name evidence="4" type="synonym">phrA</name>
    <name type="ordered locus">b0760</name>
    <name type="ordered locus">JW0743</name>
</gene>
<reference key="1">
    <citation type="journal article" date="1995" name="Microbiol. Res.">
        <title>Molecular analysis of the molybdate uptake operon, modABCD, of Escherichia coli and modR, a regulatory gene.</title>
        <authorList>
            <person name="Walkenhorst H.M."/>
            <person name="Hemschemeier S.K."/>
            <person name="Eichenlaub R."/>
        </authorList>
    </citation>
    <scope>NUCLEOTIDE SEQUENCE [GENOMIC DNA]</scope>
    <scope>INDUCTION</scope>
    <scope>DISRUPTION PHENOTYPE</scope>
    <source>
        <strain>K12 / MC1000 / ATCC 39531</strain>
    </source>
</reference>
<reference key="2">
    <citation type="journal article" date="1996" name="J. Bacteriol.">
        <title>Repression of the Escherichia coli modABCD (molybdate transport) operon by ModE.</title>
        <authorList>
            <person name="Grunden A.M."/>
            <person name="Ray R.M."/>
            <person name="Rosentel J.K."/>
            <person name="Healy F.G."/>
            <person name="Shanmugam K.T."/>
        </authorList>
    </citation>
    <scope>NUCLEOTIDE SEQUENCE [GENOMIC DNA]</scope>
    <scope>DISCUSSION OF SEQUENCE</scope>
    <source>
        <strain>K12 / BW545</strain>
    </source>
</reference>
<reference key="3">
    <citation type="journal article" date="1996" name="DNA Res.">
        <title>A 718-kb DNA sequence of the Escherichia coli K-12 genome corresponding to the 12.7-28.0 min region on the linkage map.</title>
        <authorList>
            <person name="Oshima T."/>
            <person name="Aiba H."/>
            <person name="Baba T."/>
            <person name="Fujita K."/>
            <person name="Hayashi K."/>
            <person name="Honjo A."/>
            <person name="Ikemoto K."/>
            <person name="Inada T."/>
            <person name="Itoh T."/>
            <person name="Kajihara M."/>
            <person name="Kanai K."/>
            <person name="Kashimoto K."/>
            <person name="Kimura S."/>
            <person name="Kitagawa M."/>
            <person name="Makino K."/>
            <person name="Masuda S."/>
            <person name="Miki T."/>
            <person name="Mizobuchi K."/>
            <person name="Mori H."/>
            <person name="Motomura K."/>
            <person name="Nakamura Y."/>
            <person name="Nashimoto H."/>
            <person name="Nishio Y."/>
            <person name="Saito N."/>
            <person name="Sampei G."/>
            <person name="Seki Y."/>
            <person name="Tagami H."/>
            <person name="Takemoto K."/>
            <person name="Wada C."/>
            <person name="Yamamoto Y."/>
            <person name="Yano M."/>
            <person name="Horiuchi T."/>
        </authorList>
    </citation>
    <scope>NUCLEOTIDE SEQUENCE [LARGE SCALE GENOMIC DNA]</scope>
    <source>
        <strain>K12 / W3110 / ATCC 27325 / DSM 5911</strain>
    </source>
</reference>
<reference key="4">
    <citation type="journal article" date="1997" name="Science">
        <title>The complete genome sequence of Escherichia coli K-12.</title>
        <authorList>
            <person name="Blattner F.R."/>
            <person name="Plunkett G. III"/>
            <person name="Bloch C.A."/>
            <person name="Perna N.T."/>
            <person name="Burland V."/>
            <person name="Riley M."/>
            <person name="Collado-Vides J."/>
            <person name="Glasner J.D."/>
            <person name="Rode C.K."/>
            <person name="Mayhew G.F."/>
            <person name="Gregor J."/>
            <person name="Davis N.W."/>
            <person name="Kirkpatrick H.A."/>
            <person name="Goeden M.A."/>
            <person name="Rose D.J."/>
            <person name="Mau B."/>
            <person name="Shao Y."/>
        </authorList>
    </citation>
    <scope>NUCLEOTIDE SEQUENCE [LARGE SCALE GENOMIC DNA]</scope>
    <source>
        <strain>K12 / MG1655 / ATCC 47076</strain>
    </source>
</reference>
<reference key="5">
    <citation type="journal article" date="2006" name="Mol. Syst. Biol.">
        <title>Highly accurate genome sequences of Escherichia coli K-12 strains MG1655 and W3110.</title>
        <authorList>
            <person name="Hayashi K."/>
            <person name="Morooka N."/>
            <person name="Yamamoto Y."/>
            <person name="Fujita K."/>
            <person name="Isono K."/>
            <person name="Choi S."/>
            <person name="Ohtsubo E."/>
            <person name="Baba T."/>
            <person name="Wanner B.L."/>
            <person name="Mori H."/>
            <person name="Horiuchi T."/>
        </authorList>
    </citation>
    <scope>NUCLEOTIDE SEQUENCE [LARGE SCALE GENOMIC DNA]</scope>
    <source>
        <strain>K12 / W3110 / ATCC 27325 / DSM 5911</strain>
    </source>
</reference>
<reference key="6">
    <citation type="journal article" date="1993" name="Photochem. Photobiol.">
        <title>Photoreactivation in a phrB mutant of Escherichia coli K-12: evidence for the role of a second protein in photorepair.</title>
        <authorList>
            <person name="Dorrell N."/>
            <person name="Ahmed A.H."/>
            <person name="Moss S.H."/>
        </authorList>
    </citation>
    <scope>NUCLEOTIDE SEQUENCE [GENOMIC DNA] OF 151-490</scope>
    <source>
        <strain>K12 / C600 / CR34 / ATCC 23724 / DSM 3925 / LMG 3041 / NCIB 10222</strain>
    </source>
</reference>
<name>MODF_ECOLI</name>
<keyword id="KW-0067">ATP-binding</keyword>
<keyword id="KW-0997">Cell inner membrane</keyword>
<keyword id="KW-1003">Cell membrane</keyword>
<keyword id="KW-0227">DNA damage</keyword>
<keyword id="KW-0234">DNA repair</keyword>
<keyword id="KW-0472">Membrane</keyword>
<keyword id="KW-0547">Nucleotide-binding</keyword>
<keyword id="KW-1185">Reference proteome</keyword>
<keyword id="KW-0677">Repeat</keyword>
<keyword id="KW-0813">Transport</keyword>
<protein>
    <recommendedName>
        <fullName>ABC transporter ATP-binding protein ModF</fullName>
    </recommendedName>
    <alternativeName>
        <fullName evidence="4">Photorepair protein PhrA</fullName>
    </alternativeName>
</protein>
<sequence length="490" mass="54536">MSSLQILQGTFRLSDTKTLQLPQLTLNAGDSWAFVGSNGSGKSALARALAGELPLLKGERQSQFSHITRLSFEQLQKLVSDEWQRNNTDMLGPGEDDTGRTTAEIIQDEVKDAPRCMQLAQQFGITALLDRRFKYLSTGETRKTLLCQALMSEPDLLILDEPFDGLDVASRQQLAERLASLHQSGITLVLVLNRFDEIPEFVQFAGVLADCTLAETGAKEELLQQALVAQLAHSEQLEGVQLPEPDEPSARHALPANEPRIVLNNGVVSYNDRPILNNLSWQVNPGEHWQIVGPNGAGKSTLLSLVTGDHPQGYSNDLTLFGRRRGSGETIWDIKKHIGYVSSSLHLDYRVSTTVRNVILSGYFDSIGIYQAVSDRQQKLVQQWLDILGIDKRTADAPFHSLSWGQQRLALIVRALVKHPTLLILDEPLQGLDPLNRQLIRRFVDVLISEGETQLLFVSHHAEDAPACITHRLEFVPDGGLYRYVLTKIY</sequence>
<organism>
    <name type="scientific">Escherichia coli (strain K12)</name>
    <dbReference type="NCBI Taxonomy" id="83333"/>
    <lineage>
        <taxon>Bacteria</taxon>
        <taxon>Pseudomonadati</taxon>
        <taxon>Pseudomonadota</taxon>
        <taxon>Gammaproteobacteria</taxon>
        <taxon>Enterobacterales</taxon>
        <taxon>Enterobacteriaceae</taxon>
        <taxon>Escherichia</taxon>
    </lineage>
</organism>
<comment type="function">
    <text evidence="3">Probably not involved in the transport of molybdenum into the cell.</text>
</comment>
<comment type="subcellular location">
    <subcellularLocation>
        <location evidence="1">Cell inner membrane</location>
        <topology evidence="1">Peripheral membrane protein</topology>
    </subcellularLocation>
</comment>
<comment type="induction">
    <text evidence="9">Probably part of the modE-modF operon.</text>
</comment>
<comment type="disruption phenotype">
    <text evidence="3">Not required for synthesis of the molybdenum cofactor or for the uptake of molybdate (PubMed:8564363).</text>
</comment>
<comment type="similarity">
    <text evidence="6">Belongs to the ABC transporter superfamily.</text>
</comment>
<comment type="caution">
    <text evidence="3 7 8">Was originally thought to be PhrA, involved in photoreactivation. The protein was thought to be the C-terminus of what is now accepted to be a longer reading frame called ModF; overexpression from a plasmid yields an approximately 50 kDa protein, which is too long to be PhrA (PubMed:8564363).</text>
</comment>
<accession>P31060</accession>
<dbReference type="EMBL" id="U07867">
    <property type="protein sequence ID" value="AAB06891.1"/>
    <property type="molecule type" value="Genomic_DNA"/>
</dbReference>
<dbReference type="EMBL" id="U27192">
    <property type="protein sequence ID" value="AAB60176.1"/>
    <property type="molecule type" value="Genomic_DNA"/>
</dbReference>
<dbReference type="EMBL" id="U00096">
    <property type="protein sequence ID" value="AAC73847.1"/>
    <property type="molecule type" value="Genomic_DNA"/>
</dbReference>
<dbReference type="EMBL" id="AP009048">
    <property type="protein sequence ID" value="BAA35422.1"/>
    <property type="molecule type" value="Genomic_DNA"/>
</dbReference>
<dbReference type="EMBL" id="X69182">
    <property type="protein sequence ID" value="CAA48926.1"/>
    <property type="molecule type" value="Genomic_DNA"/>
</dbReference>
<dbReference type="PIR" id="JC6038">
    <property type="entry name" value="JC6038"/>
</dbReference>
<dbReference type="RefSeq" id="NP_415281.1">
    <property type="nucleotide sequence ID" value="NC_000913.3"/>
</dbReference>
<dbReference type="RefSeq" id="WP_000096869.1">
    <property type="nucleotide sequence ID" value="NZ_SSZK01000002.1"/>
</dbReference>
<dbReference type="SMR" id="P31060"/>
<dbReference type="BioGRID" id="4263124">
    <property type="interactions" value="100"/>
</dbReference>
<dbReference type="BioGRID" id="849744">
    <property type="interactions" value="1"/>
</dbReference>
<dbReference type="FunCoup" id="P31060">
    <property type="interactions" value="304"/>
</dbReference>
<dbReference type="IntAct" id="P31060">
    <property type="interactions" value="7"/>
</dbReference>
<dbReference type="STRING" id="511145.b0760"/>
<dbReference type="jPOST" id="P31060"/>
<dbReference type="PaxDb" id="511145-b0760"/>
<dbReference type="EnsemblBacteria" id="AAC73847">
    <property type="protein sequence ID" value="AAC73847"/>
    <property type="gene ID" value="b0760"/>
</dbReference>
<dbReference type="GeneID" id="75204875"/>
<dbReference type="GeneID" id="945368"/>
<dbReference type="KEGG" id="ecj:JW0743"/>
<dbReference type="KEGG" id="eco:b0760"/>
<dbReference type="KEGG" id="ecoc:C3026_03855"/>
<dbReference type="PATRIC" id="fig|1411691.4.peg.1518"/>
<dbReference type="EchoBASE" id="EB1628"/>
<dbReference type="eggNOG" id="COG1119">
    <property type="taxonomic scope" value="Bacteria"/>
</dbReference>
<dbReference type="HOGENOM" id="CLU_000604_45_0_6"/>
<dbReference type="InParanoid" id="P31060"/>
<dbReference type="OMA" id="WEIKKHI"/>
<dbReference type="OrthoDB" id="9805029at2"/>
<dbReference type="PhylomeDB" id="P31060"/>
<dbReference type="BioCyc" id="EcoCyc:MODF-MONOMER"/>
<dbReference type="PRO" id="PR:P31060"/>
<dbReference type="Proteomes" id="UP000000625">
    <property type="component" value="Chromosome"/>
</dbReference>
<dbReference type="GO" id="GO:0043190">
    <property type="term" value="C:ATP-binding cassette (ABC) transporter complex"/>
    <property type="evidence" value="ECO:0000318"/>
    <property type="project" value="GO_Central"/>
</dbReference>
<dbReference type="GO" id="GO:0005524">
    <property type="term" value="F:ATP binding"/>
    <property type="evidence" value="ECO:0000255"/>
    <property type="project" value="EcoCyc"/>
</dbReference>
<dbReference type="GO" id="GO:0016887">
    <property type="term" value="F:ATP hydrolysis activity"/>
    <property type="evidence" value="ECO:0007669"/>
    <property type="project" value="InterPro"/>
</dbReference>
<dbReference type="GO" id="GO:0042626">
    <property type="term" value="F:ATPase-coupled transmembrane transporter activity"/>
    <property type="evidence" value="ECO:0000318"/>
    <property type="project" value="GO_Central"/>
</dbReference>
<dbReference type="GO" id="GO:0006281">
    <property type="term" value="P:DNA repair"/>
    <property type="evidence" value="ECO:0007669"/>
    <property type="project" value="UniProtKB-KW"/>
</dbReference>
<dbReference type="CDD" id="cd00267">
    <property type="entry name" value="ABC_ATPase"/>
    <property type="match status" value="1"/>
</dbReference>
<dbReference type="FunFam" id="3.40.50.300:FF:000866">
    <property type="entry name" value="Molybdate ABC transporter ATP-binding protein ModF"/>
    <property type="match status" value="1"/>
</dbReference>
<dbReference type="FunFam" id="3.40.50.300:FF:001006">
    <property type="entry name" value="Molybdate ABC transporter ATP-binding protein ModF"/>
    <property type="match status" value="1"/>
</dbReference>
<dbReference type="Gene3D" id="3.40.50.300">
    <property type="entry name" value="P-loop containing nucleotide triphosphate hydrolases"/>
    <property type="match status" value="2"/>
</dbReference>
<dbReference type="InterPro" id="IPR003593">
    <property type="entry name" value="AAA+_ATPase"/>
</dbReference>
<dbReference type="InterPro" id="IPR003439">
    <property type="entry name" value="ABC_transporter-like_ATP-bd"/>
</dbReference>
<dbReference type="InterPro" id="IPR050095">
    <property type="entry name" value="ECF_ABC_transporter_ATP-bd"/>
</dbReference>
<dbReference type="InterPro" id="IPR027417">
    <property type="entry name" value="P-loop_NTPase"/>
</dbReference>
<dbReference type="NCBIfam" id="NF008186">
    <property type="entry name" value="PRK10938.1"/>
    <property type="match status" value="1"/>
</dbReference>
<dbReference type="PANTHER" id="PTHR43553:SF3">
    <property type="entry name" value="ABC TRANSPORTER ATP-BINDING PROTEIN MODF"/>
    <property type="match status" value="1"/>
</dbReference>
<dbReference type="PANTHER" id="PTHR43553">
    <property type="entry name" value="HEAVY METAL TRANSPORTER"/>
    <property type="match status" value="1"/>
</dbReference>
<dbReference type="Pfam" id="PF00005">
    <property type="entry name" value="ABC_tran"/>
    <property type="match status" value="2"/>
</dbReference>
<dbReference type="SMART" id="SM00382">
    <property type="entry name" value="AAA"/>
    <property type="match status" value="2"/>
</dbReference>
<dbReference type="SUPFAM" id="SSF52540">
    <property type="entry name" value="P-loop containing nucleoside triphosphate hydrolases"/>
    <property type="match status" value="2"/>
</dbReference>
<dbReference type="PROSITE" id="PS50893">
    <property type="entry name" value="ABC_TRANSPORTER_2"/>
    <property type="match status" value="2"/>
</dbReference>
<proteinExistence type="evidence at transcript level"/>
<evidence type="ECO:0000250" key="1"/>
<evidence type="ECO:0000255" key="2">
    <source>
        <dbReference type="PROSITE-ProRule" id="PRU00434"/>
    </source>
</evidence>
<evidence type="ECO:0000269" key="3">
    <source>
    </source>
</evidence>
<evidence type="ECO:0000303" key="4">
    <source>
    </source>
</evidence>
<evidence type="ECO:0000303" key="5">
    <source>
    </source>
</evidence>
<evidence type="ECO:0000305" key="6"/>
<evidence type="ECO:0000305" key="7">
    <source>
    </source>
</evidence>
<evidence type="ECO:0000305" key="8">
    <source>
    </source>
</evidence>
<evidence type="ECO:0000305" key="9">
    <source>
    </source>
</evidence>
<feature type="chain" id="PRO_0000092566" description="ABC transporter ATP-binding protein ModF">
    <location>
        <begin position="1"/>
        <end position="490"/>
    </location>
</feature>
<feature type="domain" description="ABC transporter 1" evidence="2">
    <location>
        <begin position="4"/>
        <end position="235"/>
    </location>
</feature>
<feature type="domain" description="ABC transporter 2" evidence="2">
    <location>
        <begin position="261"/>
        <end position="489"/>
    </location>
</feature>
<feature type="binding site" evidence="2">
    <location>
        <begin position="36"/>
        <end position="43"/>
    </location>
    <ligand>
        <name>ATP</name>
        <dbReference type="ChEBI" id="CHEBI:30616"/>
        <label>1</label>
    </ligand>
</feature>
<feature type="binding site" evidence="2">
    <location>
        <begin position="293"/>
        <end position="300"/>
    </location>
    <ligand>
        <name>ATP</name>
        <dbReference type="ChEBI" id="CHEBI:30616"/>
        <label>2</label>
    </ligand>
</feature>
<feature type="sequence conflict" description="In Ref. 6; CAA48926." evidence="6" ref="6">
    <original>L</original>
    <variation>A</variation>
    <location>
        <position position="320"/>
    </location>
</feature>
<feature type="sequence conflict" description="In Ref. 6; CAA48926." evidence="6" ref="6">
    <original>G</original>
    <variation>R</variation>
    <location>
        <position position="322"/>
    </location>
</feature>
<feature type="sequence conflict" description="In Ref. 6; CAA48926." evidence="6" ref="6">
    <original>R</original>
    <variation>A</variation>
    <location>
        <position position="325"/>
    </location>
</feature>